<dbReference type="EMBL" id="AE017226">
    <property type="protein sequence ID" value="AAS12378.1"/>
    <property type="molecule type" value="Genomic_DNA"/>
</dbReference>
<dbReference type="RefSeq" id="NP_972467.1">
    <property type="nucleotide sequence ID" value="NC_002967.9"/>
</dbReference>
<dbReference type="RefSeq" id="WP_002679554.1">
    <property type="nucleotide sequence ID" value="NC_002967.9"/>
</dbReference>
<dbReference type="SMR" id="Q73LJ9"/>
<dbReference type="STRING" id="243275.TDE_1863"/>
<dbReference type="PaxDb" id="243275-TDE_1863"/>
<dbReference type="GeneID" id="2740052"/>
<dbReference type="KEGG" id="tde:TDE_1863"/>
<dbReference type="PATRIC" id="fig|243275.7.peg.1768"/>
<dbReference type="eggNOG" id="COG0632">
    <property type="taxonomic scope" value="Bacteria"/>
</dbReference>
<dbReference type="HOGENOM" id="CLU_087936_2_0_12"/>
<dbReference type="OrthoDB" id="5293449at2"/>
<dbReference type="Proteomes" id="UP000008212">
    <property type="component" value="Chromosome"/>
</dbReference>
<dbReference type="GO" id="GO:0005737">
    <property type="term" value="C:cytoplasm"/>
    <property type="evidence" value="ECO:0007669"/>
    <property type="project" value="UniProtKB-SubCell"/>
</dbReference>
<dbReference type="GO" id="GO:0048476">
    <property type="term" value="C:Holliday junction resolvase complex"/>
    <property type="evidence" value="ECO:0007669"/>
    <property type="project" value="UniProtKB-UniRule"/>
</dbReference>
<dbReference type="GO" id="GO:0005524">
    <property type="term" value="F:ATP binding"/>
    <property type="evidence" value="ECO:0007669"/>
    <property type="project" value="InterPro"/>
</dbReference>
<dbReference type="GO" id="GO:0000400">
    <property type="term" value="F:four-way junction DNA binding"/>
    <property type="evidence" value="ECO:0007669"/>
    <property type="project" value="UniProtKB-UniRule"/>
</dbReference>
<dbReference type="GO" id="GO:0009378">
    <property type="term" value="F:four-way junction helicase activity"/>
    <property type="evidence" value="ECO:0007669"/>
    <property type="project" value="InterPro"/>
</dbReference>
<dbReference type="GO" id="GO:0006310">
    <property type="term" value="P:DNA recombination"/>
    <property type="evidence" value="ECO:0007669"/>
    <property type="project" value="UniProtKB-UniRule"/>
</dbReference>
<dbReference type="GO" id="GO:0006281">
    <property type="term" value="P:DNA repair"/>
    <property type="evidence" value="ECO:0007669"/>
    <property type="project" value="UniProtKB-UniRule"/>
</dbReference>
<dbReference type="Gene3D" id="1.10.150.20">
    <property type="entry name" value="5' to 3' exonuclease, C-terminal subdomain"/>
    <property type="match status" value="1"/>
</dbReference>
<dbReference type="Gene3D" id="2.40.50.140">
    <property type="entry name" value="Nucleic acid-binding proteins"/>
    <property type="match status" value="1"/>
</dbReference>
<dbReference type="HAMAP" id="MF_00031">
    <property type="entry name" value="DNA_HJ_migration_RuvA"/>
    <property type="match status" value="1"/>
</dbReference>
<dbReference type="InterPro" id="IPR013849">
    <property type="entry name" value="DNA_helicase_Holl-junc_RuvA_I"/>
</dbReference>
<dbReference type="InterPro" id="IPR003583">
    <property type="entry name" value="Hlx-hairpin-Hlx_DNA-bd_motif"/>
</dbReference>
<dbReference type="InterPro" id="IPR012340">
    <property type="entry name" value="NA-bd_OB-fold"/>
</dbReference>
<dbReference type="InterPro" id="IPR000085">
    <property type="entry name" value="RuvA"/>
</dbReference>
<dbReference type="InterPro" id="IPR010994">
    <property type="entry name" value="RuvA_2-like"/>
</dbReference>
<dbReference type="NCBIfam" id="TIGR00084">
    <property type="entry name" value="ruvA"/>
    <property type="match status" value="1"/>
</dbReference>
<dbReference type="Pfam" id="PF14520">
    <property type="entry name" value="HHH_5"/>
    <property type="match status" value="1"/>
</dbReference>
<dbReference type="Pfam" id="PF01330">
    <property type="entry name" value="RuvA_N"/>
    <property type="match status" value="1"/>
</dbReference>
<dbReference type="SMART" id="SM00278">
    <property type="entry name" value="HhH1"/>
    <property type="match status" value="2"/>
</dbReference>
<dbReference type="SUPFAM" id="SSF50249">
    <property type="entry name" value="Nucleic acid-binding proteins"/>
    <property type="match status" value="1"/>
</dbReference>
<dbReference type="SUPFAM" id="SSF47781">
    <property type="entry name" value="RuvA domain 2-like"/>
    <property type="match status" value="1"/>
</dbReference>
<name>RUVA_TREDE</name>
<accession>Q73LJ9</accession>
<sequence>MFNSISGILSGKTTDSVYVENSGIEWEIFVSALALDALGTVGKEVKVYTWLYHREDQMRLFGFPNQAERSLFLDLTKVEGVGPRQALKIMSGLNSSSLEKALEEGDLDTLQKAPGVGKKTAQKMILALKGKLTNLNEVSSKGQASVSCEYEDIVTALTEMGFERKSVIVQVEKIAEEMKAAGSDPLKNEEELFRRSIVALS</sequence>
<protein>
    <recommendedName>
        <fullName evidence="1">Holliday junction branch migration complex subunit RuvA</fullName>
    </recommendedName>
</protein>
<comment type="function">
    <text evidence="1">The RuvA-RuvB-RuvC complex processes Holliday junction (HJ) DNA during genetic recombination and DNA repair, while the RuvA-RuvB complex plays an important role in the rescue of blocked DNA replication forks via replication fork reversal (RFR). RuvA specifically binds to HJ cruciform DNA, conferring on it an open structure. The RuvB hexamer acts as an ATP-dependent pump, pulling dsDNA into and through the RuvAB complex. HJ branch migration allows RuvC to scan DNA until it finds its consensus sequence, where it cleaves and resolves the cruciform DNA.</text>
</comment>
<comment type="subunit">
    <text evidence="1">Homotetramer. Forms an RuvA(8)-RuvB(12)-Holliday junction (HJ) complex. HJ DNA is sandwiched between 2 RuvA tetramers; dsDNA enters through RuvA and exits via RuvB. An RuvB hexamer assembles on each DNA strand where it exits the tetramer. Each RuvB hexamer is contacted by two RuvA subunits (via domain III) on 2 adjacent RuvB subunits; this complex drives branch migration. In the full resolvosome a probable DNA-RuvA(4)-RuvB(12)-RuvC(2) complex forms which resolves the HJ.</text>
</comment>
<comment type="subcellular location">
    <subcellularLocation>
        <location evidence="1">Cytoplasm</location>
    </subcellularLocation>
</comment>
<comment type="domain">
    <text evidence="1">Has three domains with a flexible linker between the domains II and III and assumes an 'L' shape. Domain III is highly mobile and contacts RuvB.</text>
</comment>
<comment type="similarity">
    <text evidence="1">Belongs to the RuvA family.</text>
</comment>
<feature type="chain" id="PRO_0000224921" description="Holliday junction branch migration complex subunit RuvA">
    <location>
        <begin position="1"/>
        <end position="201"/>
    </location>
</feature>
<feature type="region of interest" description="Domain I" evidence="1">
    <location>
        <begin position="1"/>
        <end position="64"/>
    </location>
</feature>
<feature type="region of interest" description="Domain II" evidence="1">
    <location>
        <begin position="65"/>
        <end position="140"/>
    </location>
</feature>
<feature type="region of interest" description="Flexible linker" evidence="1">
    <location>
        <begin position="140"/>
        <end position="144"/>
    </location>
</feature>
<feature type="region of interest" description="Domain III" evidence="1">
    <location>
        <begin position="145"/>
        <end position="201"/>
    </location>
</feature>
<reference key="1">
    <citation type="journal article" date="2004" name="Proc. Natl. Acad. Sci. U.S.A.">
        <title>Comparison of the genome of the oral pathogen Treponema denticola with other spirochete genomes.</title>
        <authorList>
            <person name="Seshadri R."/>
            <person name="Myers G.S.A."/>
            <person name="Tettelin H."/>
            <person name="Eisen J.A."/>
            <person name="Heidelberg J.F."/>
            <person name="Dodson R.J."/>
            <person name="Davidsen T.M."/>
            <person name="DeBoy R.T."/>
            <person name="Fouts D.E."/>
            <person name="Haft D.H."/>
            <person name="Selengut J."/>
            <person name="Ren Q."/>
            <person name="Brinkac L.M."/>
            <person name="Madupu R."/>
            <person name="Kolonay J.F."/>
            <person name="Durkin S.A."/>
            <person name="Daugherty S.C."/>
            <person name="Shetty J."/>
            <person name="Shvartsbeyn A."/>
            <person name="Gebregeorgis E."/>
            <person name="Geer K."/>
            <person name="Tsegaye G."/>
            <person name="Malek J.A."/>
            <person name="Ayodeji B."/>
            <person name="Shatsman S."/>
            <person name="McLeod M.P."/>
            <person name="Smajs D."/>
            <person name="Howell J.K."/>
            <person name="Pal S."/>
            <person name="Amin A."/>
            <person name="Vashisth P."/>
            <person name="McNeill T.Z."/>
            <person name="Xiang Q."/>
            <person name="Sodergren E."/>
            <person name="Baca E."/>
            <person name="Weinstock G.M."/>
            <person name="Norris S.J."/>
            <person name="Fraser C.M."/>
            <person name="Paulsen I.T."/>
        </authorList>
    </citation>
    <scope>NUCLEOTIDE SEQUENCE [LARGE SCALE GENOMIC DNA]</scope>
    <source>
        <strain>ATCC 35405 / DSM 14222 / CIP 103919 / JCM 8153 / KCTC 15104</strain>
    </source>
</reference>
<proteinExistence type="inferred from homology"/>
<keyword id="KW-0963">Cytoplasm</keyword>
<keyword id="KW-0227">DNA damage</keyword>
<keyword id="KW-0233">DNA recombination</keyword>
<keyword id="KW-0234">DNA repair</keyword>
<keyword id="KW-0238">DNA-binding</keyword>
<keyword id="KW-1185">Reference proteome</keyword>
<organism>
    <name type="scientific">Treponema denticola (strain ATCC 35405 / DSM 14222 / CIP 103919 / JCM 8153 / KCTC 15104)</name>
    <dbReference type="NCBI Taxonomy" id="243275"/>
    <lineage>
        <taxon>Bacteria</taxon>
        <taxon>Pseudomonadati</taxon>
        <taxon>Spirochaetota</taxon>
        <taxon>Spirochaetia</taxon>
        <taxon>Spirochaetales</taxon>
        <taxon>Treponemataceae</taxon>
        <taxon>Treponema</taxon>
    </lineage>
</organism>
<evidence type="ECO:0000255" key="1">
    <source>
        <dbReference type="HAMAP-Rule" id="MF_00031"/>
    </source>
</evidence>
<gene>
    <name evidence="1" type="primary">ruvA</name>
    <name type="ordered locus">TDE_1863</name>
</gene>